<proteinExistence type="inferred from homology"/>
<name>FPG_RHOCS</name>
<reference key="1">
    <citation type="submission" date="2007-03" db="EMBL/GenBank/DDBJ databases">
        <title>Genome sequence of Rhodospirillum centenum.</title>
        <authorList>
            <person name="Touchman J.W."/>
            <person name="Bauer C."/>
            <person name="Blankenship R.E."/>
        </authorList>
    </citation>
    <scope>NUCLEOTIDE SEQUENCE [LARGE SCALE GENOMIC DNA]</scope>
    <source>
        <strain>ATCC 51521 / SW</strain>
    </source>
</reference>
<organism>
    <name type="scientific">Rhodospirillum centenum (strain ATCC 51521 / SW)</name>
    <dbReference type="NCBI Taxonomy" id="414684"/>
    <lineage>
        <taxon>Bacteria</taxon>
        <taxon>Pseudomonadati</taxon>
        <taxon>Pseudomonadota</taxon>
        <taxon>Alphaproteobacteria</taxon>
        <taxon>Rhodospirillales</taxon>
        <taxon>Rhodospirillaceae</taxon>
        <taxon>Rhodospirillum</taxon>
    </lineage>
</organism>
<dbReference type="EC" id="3.2.2.23" evidence="2"/>
<dbReference type="EC" id="4.2.99.18" evidence="2"/>
<dbReference type="EMBL" id="CP000613">
    <property type="protein sequence ID" value="ACJ00418.1"/>
    <property type="molecule type" value="Genomic_DNA"/>
</dbReference>
<dbReference type="RefSeq" id="WP_012568198.1">
    <property type="nucleotide sequence ID" value="NC_011420.2"/>
</dbReference>
<dbReference type="SMR" id="B6IVU4"/>
<dbReference type="STRING" id="414684.RC1_3052"/>
<dbReference type="KEGG" id="rce:RC1_3052"/>
<dbReference type="eggNOG" id="COG0266">
    <property type="taxonomic scope" value="Bacteria"/>
</dbReference>
<dbReference type="HOGENOM" id="CLU_038423_1_1_5"/>
<dbReference type="OrthoDB" id="9800855at2"/>
<dbReference type="Proteomes" id="UP000001591">
    <property type="component" value="Chromosome"/>
</dbReference>
<dbReference type="GO" id="GO:0034039">
    <property type="term" value="F:8-oxo-7,8-dihydroguanine DNA N-glycosylase activity"/>
    <property type="evidence" value="ECO:0007669"/>
    <property type="project" value="TreeGrafter"/>
</dbReference>
<dbReference type="GO" id="GO:0140078">
    <property type="term" value="F:class I DNA-(apurinic or apyrimidinic site) endonuclease activity"/>
    <property type="evidence" value="ECO:0007669"/>
    <property type="project" value="UniProtKB-EC"/>
</dbReference>
<dbReference type="GO" id="GO:0003684">
    <property type="term" value="F:damaged DNA binding"/>
    <property type="evidence" value="ECO:0007669"/>
    <property type="project" value="InterPro"/>
</dbReference>
<dbReference type="GO" id="GO:0008270">
    <property type="term" value="F:zinc ion binding"/>
    <property type="evidence" value="ECO:0007669"/>
    <property type="project" value="UniProtKB-UniRule"/>
</dbReference>
<dbReference type="GO" id="GO:0006284">
    <property type="term" value="P:base-excision repair"/>
    <property type="evidence" value="ECO:0007669"/>
    <property type="project" value="InterPro"/>
</dbReference>
<dbReference type="CDD" id="cd08966">
    <property type="entry name" value="EcFpg-like_N"/>
    <property type="match status" value="1"/>
</dbReference>
<dbReference type="FunFam" id="1.10.8.50:FF:000003">
    <property type="entry name" value="Formamidopyrimidine-DNA glycosylase"/>
    <property type="match status" value="1"/>
</dbReference>
<dbReference type="Gene3D" id="1.10.8.50">
    <property type="match status" value="1"/>
</dbReference>
<dbReference type="Gene3D" id="3.20.190.10">
    <property type="entry name" value="MutM-like, N-terminal"/>
    <property type="match status" value="1"/>
</dbReference>
<dbReference type="HAMAP" id="MF_00103">
    <property type="entry name" value="Fapy_DNA_glycosyl"/>
    <property type="match status" value="1"/>
</dbReference>
<dbReference type="InterPro" id="IPR015886">
    <property type="entry name" value="DNA_glyclase/AP_lyase_DNA-bd"/>
</dbReference>
<dbReference type="InterPro" id="IPR020629">
    <property type="entry name" value="Formamido-pyr_DNA_Glyclase"/>
</dbReference>
<dbReference type="InterPro" id="IPR012319">
    <property type="entry name" value="FPG_cat"/>
</dbReference>
<dbReference type="InterPro" id="IPR035937">
    <property type="entry name" value="MutM-like_N-ter"/>
</dbReference>
<dbReference type="InterPro" id="IPR010979">
    <property type="entry name" value="Ribosomal_uS13-like_H2TH"/>
</dbReference>
<dbReference type="InterPro" id="IPR000214">
    <property type="entry name" value="Znf_DNA_glyclase/AP_lyase"/>
</dbReference>
<dbReference type="NCBIfam" id="TIGR00577">
    <property type="entry name" value="fpg"/>
    <property type="match status" value="1"/>
</dbReference>
<dbReference type="NCBIfam" id="NF002211">
    <property type="entry name" value="PRK01103.1"/>
    <property type="match status" value="1"/>
</dbReference>
<dbReference type="PANTHER" id="PTHR22993">
    <property type="entry name" value="FORMAMIDOPYRIMIDINE-DNA GLYCOSYLASE"/>
    <property type="match status" value="1"/>
</dbReference>
<dbReference type="PANTHER" id="PTHR22993:SF9">
    <property type="entry name" value="FORMAMIDOPYRIMIDINE-DNA GLYCOSYLASE"/>
    <property type="match status" value="1"/>
</dbReference>
<dbReference type="Pfam" id="PF01149">
    <property type="entry name" value="Fapy_DNA_glyco"/>
    <property type="match status" value="1"/>
</dbReference>
<dbReference type="Pfam" id="PF06831">
    <property type="entry name" value="H2TH"/>
    <property type="match status" value="1"/>
</dbReference>
<dbReference type="SMART" id="SM00898">
    <property type="entry name" value="Fapy_DNA_glyco"/>
    <property type="match status" value="1"/>
</dbReference>
<dbReference type="SMART" id="SM01232">
    <property type="entry name" value="H2TH"/>
    <property type="match status" value="1"/>
</dbReference>
<dbReference type="SUPFAM" id="SSF57716">
    <property type="entry name" value="Glucocorticoid receptor-like (DNA-binding domain)"/>
    <property type="match status" value="1"/>
</dbReference>
<dbReference type="SUPFAM" id="SSF81624">
    <property type="entry name" value="N-terminal domain of MutM-like DNA repair proteins"/>
    <property type="match status" value="1"/>
</dbReference>
<dbReference type="SUPFAM" id="SSF46946">
    <property type="entry name" value="S13-like H2TH domain"/>
    <property type="match status" value="1"/>
</dbReference>
<dbReference type="PROSITE" id="PS51068">
    <property type="entry name" value="FPG_CAT"/>
    <property type="match status" value="1"/>
</dbReference>
<dbReference type="PROSITE" id="PS51066">
    <property type="entry name" value="ZF_FPG_2"/>
    <property type="match status" value="1"/>
</dbReference>
<gene>
    <name evidence="2" type="primary">mutM</name>
    <name evidence="2" type="synonym">fpg</name>
    <name type="ordered locus">RC1_3052</name>
</gene>
<protein>
    <recommendedName>
        <fullName evidence="2">Formamidopyrimidine-DNA glycosylase</fullName>
        <shortName evidence="2">Fapy-DNA glycosylase</shortName>
        <ecNumber evidence="2">3.2.2.23</ecNumber>
    </recommendedName>
    <alternativeName>
        <fullName evidence="2">DNA-(apurinic or apyrimidinic site) lyase MutM</fullName>
        <shortName evidence="2">AP lyase MutM</shortName>
        <ecNumber evidence="2">4.2.99.18</ecNumber>
    </alternativeName>
</protein>
<keyword id="KW-0227">DNA damage</keyword>
<keyword id="KW-0234">DNA repair</keyword>
<keyword id="KW-0238">DNA-binding</keyword>
<keyword id="KW-0326">Glycosidase</keyword>
<keyword id="KW-0378">Hydrolase</keyword>
<keyword id="KW-0456">Lyase</keyword>
<keyword id="KW-0479">Metal-binding</keyword>
<keyword id="KW-0511">Multifunctional enzyme</keyword>
<keyword id="KW-1185">Reference proteome</keyword>
<keyword id="KW-0862">Zinc</keyword>
<keyword id="KW-0863">Zinc-finger</keyword>
<comment type="function">
    <text evidence="2">Involved in base excision repair of DNA damaged by oxidation or by mutagenic agents. Acts as a DNA glycosylase that recognizes and removes damaged bases. Has a preference for oxidized purines, such as 7,8-dihydro-8-oxoguanine (8-oxoG). Has AP (apurinic/apyrimidinic) lyase activity and introduces nicks in the DNA strand. Cleaves the DNA backbone by beta-delta elimination to generate a single-strand break at the site of the removed base with both 3'- and 5'-phosphates.</text>
</comment>
<comment type="catalytic activity">
    <reaction evidence="2">
        <text>Hydrolysis of DNA containing ring-opened 7-methylguanine residues, releasing 2,6-diamino-4-hydroxy-5-(N-methyl)formamidopyrimidine.</text>
        <dbReference type="EC" id="3.2.2.23"/>
    </reaction>
</comment>
<comment type="catalytic activity">
    <reaction evidence="2">
        <text>2'-deoxyribonucleotide-(2'-deoxyribose 5'-phosphate)-2'-deoxyribonucleotide-DNA = a 3'-end 2'-deoxyribonucleotide-(2,3-dehydro-2,3-deoxyribose 5'-phosphate)-DNA + a 5'-end 5'-phospho-2'-deoxyribonucleoside-DNA + H(+)</text>
        <dbReference type="Rhea" id="RHEA:66592"/>
        <dbReference type="Rhea" id="RHEA-COMP:13180"/>
        <dbReference type="Rhea" id="RHEA-COMP:16897"/>
        <dbReference type="Rhea" id="RHEA-COMP:17067"/>
        <dbReference type="ChEBI" id="CHEBI:15378"/>
        <dbReference type="ChEBI" id="CHEBI:136412"/>
        <dbReference type="ChEBI" id="CHEBI:157695"/>
        <dbReference type="ChEBI" id="CHEBI:167181"/>
        <dbReference type="EC" id="4.2.99.18"/>
    </reaction>
</comment>
<comment type="cofactor">
    <cofactor evidence="2">
        <name>Zn(2+)</name>
        <dbReference type="ChEBI" id="CHEBI:29105"/>
    </cofactor>
    <text evidence="2">Binds 1 zinc ion per subunit.</text>
</comment>
<comment type="subunit">
    <text evidence="2">Monomer.</text>
</comment>
<comment type="similarity">
    <text evidence="2">Belongs to the FPG family.</text>
</comment>
<accession>B6IVU4</accession>
<sequence>MPELPEVETVRRGLEMKIAGRVLVRVAQYRPDLRFPLPERFAARLTGLRVAGLFRRAKYLLIRLEGSAEGPLVWLVHLGMSGTLVVRRGPPGPPGPHDHLVFETDPPPGEAQGWVVTYNDVRRFGFMDLFPEALLDSHPMLACLGPEPLGNGFDAEELSRRLAGKITPIKAALLDQTVVAGLGNIYVCESLFRAGISPRRLAHTVAGRRAGRLVPAIRDVLTEAIAAGGSSLRDYVQSDGELGYFQHSFKVYGREGEPCPGCDCDPVRTGGIARIVQSGRSTFYCPRHQR</sequence>
<evidence type="ECO:0000250" key="1"/>
<evidence type="ECO:0000255" key="2">
    <source>
        <dbReference type="HAMAP-Rule" id="MF_00103"/>
    </source>
</evidence>
<feature type="initiator methionine" description="Removed" evidence="1">
    <location>
        <position position="1"/>
    </location>
</feature>
<feature type="chain" id="PRO_1000094068" description="Formamidopyrimidine-DNA glycosylase">
    <location>
        <begin position="2"/>
        <end position="290"/>
    </location>
</feature>
<feature type="zinc finger region" description="FPG-type; atypical" evidence="2">
    <location>
        <begin position="250"/>
        <end position="290"/>
    </location>
</feature>
<feature type="active site" description="Schiff-base intermediate with DNA" evidence="2">
    <location>
        <position position="2"/>
    </location>
</feature>
<feature type="active site" description="Proton donor" evidence="2">
    <location>
        <position position="3"/>
    </location>
</feature>
<feature type="active site" description="Proton donor; for beta-elimination activity" evidence="2">
    <location>
        <position position="58"/>
    </location>
</feature>
<feature type="active site" description="Proton donor; for delta-elimination activity" evidence="2">
    <location>
        <position position="280"/>
    </location>
</feature>
<feature type="binding site" evidence="2">
    <location>
        <position position="97"/>
    </location>
    <ligand>
        <name>DNA</name>
        <dbReference type="ChEBI" id="CHEBI:16991"/>
    </ligand>
</feature>
<feature type="binding site" evidence="2">
    <location>
        <position position="122"/>
    </location>
    <ligand>
        <name>DNA</name>
        <dbReference type="ChEBI" id="CHEBI:16991"/>
    </ligand>
</feature>
<feature type="binding site" evidence="2">
    <location>
        <position position="165"/>
    </location>
    <ligand>
        <name>DNA</name>
        <dbReference type="ChEBI" id="CHEBI:16991"/>
    </ligand>
</feature>